<protein>
    <recommendedName>
        <fullName evidence="1">Aspartate carbamoyltransferase catalytic subunit</fullName>
        <ecNumber evidence="1">2.1.3.2</ecNumber>
    </recommendedName>
    <alternativeName>
        <fullName evidence="1">Aspartate transcarbamylase</fullName>
        <shortName evidence="1">ATCase</shortName>
    </alternativeName>
</protein>
<feature type="chain" id="PRO_1000088818" description="Aspartate carbamoyltransferase catalytic subunit">
    <location>
        <begin position="1"/>
        <end position="311"/>
    </location>
</feature>
<feature type="binding site" evidence="1">
    <location>
        <position position="55"/>
    </location>
    <ligand>
        <name>carbamoyl phosphate</name>
        <dbReference type="ChEBI" id="CHEBI:58228"/>
    </ligand>
</feature>
<feature type="binding site" evidence="1">
    <location>
        <position position="56"/>
    </location>
    <ligand>
        <name>carbamoyl phosphate</name>
        <dbReference type="ChEBI" id="CHEBI:58228"/>
    </ligand>
</feature>
<feature type="binding site" evidence="1">
    <location>
        <position position="85"/>
    </location>
    <ligand>
        <name>L-aspartate</name>
        <dbReference type="ChEBI" id="CHEBI:29991"/>
    </ligand>
</feature>
<feature type="binding site" evidence="1">
    <location>
        <position position="106"/>
    </location>
    <ligand>
        <name>carbamoyl phosphate</name>
        <dbReference type="ChEBI" id="CHEBI:58228"/>
    </ligand>
</feature>
<feature type="binding site" evidence="1">
    <location>
        <position position="135"/>
    </location>
    <ligand>
        <name>carbamoyl phosphate</name>
        <dbReference type="ChEBI" id="CHEBI:58228"/>
    </ligand>
</feature>
<feature type="binding site" evidence="1">
    <location>
        <position position="138"/>
    </location>
    <ligand>
        <name>carbamoyl phosphate</name>
        <dbReference type="ChEBI" id="CHEBI:58228"/>
    </ligand>
</feature>
<feature type="binding site" evidence="1">
    <location>
        <position position="168"/>
    </location>
    <ligand>
        <name>L-aspartate</name>
        <dbReference type="ChEBI" id="CHEBI:29991"/>
    </ligand>
</feature>
<feature type="binding site" evidence="1">
    <location>
        <position position="230"/>
    </location>
    <ligand>
        <name>L-aspartate</name>
        <dbReference type="ChEBI" id="CHEBI:29991"/>
    </ligand>
</feature>
<feature type="binding site" evidence="1">
    <location>
        <position position="268"/>
    </location>
    <ligand>
        <name>carbamoyl phosphate</name>
        <dbReference type="ChEBI" id="CHEBI:58228"/>
    </ligand>
</feature>
<feature type="binding site" evidence="1">
    <location>
        <position position="269"/>
    </location>
    <ligand>
        <name>carbamoyl phosphate</name>
        <dbReference type="ChEBI" id="CHEBI:58228"/>
    </ligand>
</feature>
<organism>
    <name type="scientific">Yersinia pestis bv. Antiqua (strain Angola)</name>
    <dbReference type="NCBI Taxonomy" id="349746"/>
    <lineage>
        <taxon>Bacteria</taxon>
        <taxon>Pseudomonadati</taxon>
        <taxon>Pseudomonadota</taxon>
        <taxon>Gammaproteobacteria</taxon>
        <taxon>Enterobacterales</taxon>
        <taxon>Yersiniaceae</taxon>
        <taxon>Yersinia</taxon>
    </lineage>
</organism>
<gene>
    <name evidence="1" type="primary">pyrB</name>
    <name type="ordered locus">YpAngola_A1158</name>
</gene>
<sequence length="311" mass="34559">MANPLYHKHIISINDLSRDELELVLRTAASLKKTPQPELLKHKVIASCFFEASTRTRLSFETSIHRLGASVVGFSDSSNTSLGKKGETLADTMSVISTYVDAIVMRHPQEGASRLAAQFSGNVPIVNAGDGANQHPTQTLLDLFTIQETQGRLDNINIAMVGDLKYGRTVHSLTQALAKFNGNHFFFIAPDALAMPAYILQMLEEKEIEYSLHESLEEVVPELDILYMTRVQKERLDPSEYANVKAQFILRSSDLTGARDNLKVLHPLPRIDEITTDVDKTPYAYYFQQAGNGIFARQALLALVLNAELAL</sequence>
<reference key="1">
    <citation type="journal article" date="2010" name="J. Bacteriol.">
        <title>Genome sequence of the deep-rooted Yersinia pestis strain Angola reveals new insights into the evolution and pangenome of the plague bacterium.</title>
        <authorList>
            <person name="Eppinger M."/>
            <person name="Worsham P.L."/>
            <person name="Nikolich M.P."/>
            <person name="Riley D.R."/>
            <person name="Sebastian Y."/>
            <person name="Mou S."/>
            <person name="Achtman M."/>
            <person name="Lindler L.E."/>
            <person name="Ravel J."/>
        </authorList>
    </citation>
    <scope>NUCLEOTIDE SEQUENCE [LARGE SCALE GENOMIC DNA]</scope>
    <source>
        <strain>Angola</strain>
    </source>
</reference>
<accession>A9R1U2</accession>
<dbReference type="EC" id="2.1.3.2" evidence="1"/>
<dbReference type="EMBL" id="CP000901">
    <property type="protein sequence ID" value="ABX87253.1"/>
    <property type="molecule type" value="Genomic_DNA"/>
</dbReference>
<dbReference type="RefSeq" id="WP_002210111.1">
    <property type="nucleotide sequence ID" value="NZ_CP009935.1"/>
</dbReference>
<dbReference type="SMR" id="A9R1U2"/>
<dbReference type="GeneID" id="57975128"/>
<dbReference type="KEGG" id="ypg:YpAngola_A1158"/>
<dbReference type="PATRIC" id="fig|349746.12.peg.2111"/>
<dbReference type="UniPathway" id="UPA00070">
    <property type="reaction ID" value="UER00116"/>
</dbReference>
<dbReference type="GO" id="GO:0005829">
    <property type="term" value="C:cytosol"/>
    <property type="evidence" value="ECO:0007669"/>
    <property type="project" value="TreeGrafter"/>
</dbReference>
<dbReference type="GO" id="GO:0016597">
    <property type="term" value="F:amino acid binding"/>
    <property type="evidence" value="ECO:0007669"/>
    <property type="project" value="InterPro"/>
</dbReference>
<dbReference type="GO" id="GO:0004070">
    <property type="term" value="F:aspartate carbamoyltransferase activity"/>
    <property type="evidence" value="ECO:0007669"/>
    <property type="project" value="UniProtKB-UniRule"/>
</dbReference>
<dbReference type="GO" id="GO:0006207">
    <property type="term" value="P:'de novo' pyrimidine nucleobase biosynthetic process"/>
    <property type="evidence" value="ECO:0007669"/>
    <property type="project" value="InterPro"/>
</dbReference>
<dbReference type="GO" id="GO:0044205">
    <property type="term" value="P:'de novo' UMP biosynthetic process"/>
    <property type="evidence" value="ECO:0007669"/>
    <property type="project" value="UniProtKB-UniRule"/>
</dbReference>
<dbReference type="GO" id="GO:0006520">
    <property type="term" value="P:amino acid metabolic process"/>
    <property type="evidence" value="ECO:0007669"/>
    <property type="project" value="InterPro"/>
</dbReference>
<dbReference type="FunFam" id="3.40.50.1370:FF:000001">
    <property type="entry name" value="Aspartate carbamoyltransferase"/>
    <property type="match status" value="1"/>
</dbReference>
<dbReference type="FunFam" id="3.40.50.1370:FF:000002">
    <property type="entry name" value="Aspartate carbamoyltransferase 2"/>
    <property type="match status" value="1"/>
</dbReference>
<dbReference type="Gene3D" id="3.40.50.1370">
    <property type="entry name" value="Aspartate/ornithine carbamoyltransferase"/>
    <property type="match status" value="2"/>
</dbReference>
<dbReference type="HAMAP" id="MF_00001">
    <property type="entry name" value="Asp_carb_tr"/>
    <property type="match status" value="1"/>
</dbReference>
<dbReference type="InterPro" id="IPR006132">
    <property type="entry name" value="Asp/Orn_carbamoyltranf_P-bd"/>
</dbReference>
<dbReference type="InterPro" id="IPR006130">
    <property type="entry name" value="Asp/Orn_carbamoylTrfase"/>
</dbReference>
<dbReference type="InterPro" id="IPR036901">
    <property type="entry name" value="Asp/Orn_carbamoylTrfase_sf"/>
</dbReference>
<dbReference type="InterPro" id="IPR002082">
    <property type="entry name" value="Asp_carbamoyltransf"/>
</dbReference>
<dbReference type="InterPro" id="IPR006131">
    <property type="entry name" value="Asp_carbamoyltransf_Asp/Orn-bd"/>
</dbReference>
<dbReference type="NCBIfam" id="TIGR00670">
    <property type="entry name" value="asp_carb_tr"/>
    <property type="match status" value="1"/>
</dbReference>
<dbReference type="NCBIfam" id="NF002032">
    <property type="entry name" value="PRK00856.1"/>
    <property type="match status" value="1"/>
</dbReference>
<dbReference type="PANTHER" id="PTHR45753:SF6">
    <property type="entry name" value="ASPARTATE CARBAMOYLTRANSFERASE"/>
    <property type="match status" value="1"/>
</dbReference>
<dbReference type="PANTHER" id="PTHR45753">
    <property type="entry name" value="ORNITHINE CARBAMOYLTRANSFERASE, MITOCHONDRIAL"/>
    <property type="match status" value="1"/>
</dbReference>
<dbReference type="Pfam" id="PF00185">
    <property type="entry name" value="OTCace"/>
    <property type="match status" value="1"/>
</dbReference>
<dbReference type="Pfam" id="PF02729">
    <property type="entry name" value="OTCace_N"/>
    <property type="match status" value="1"/>
</dbReference>
<dbReference type="PRINTS" id="PR00100">
    <property type="entry name" value="AOTCASE"/>
</dbReference>
<dbReference type="PRINTS" id="PR00101">
    <property type="entry name" value="ATCASE"/>
</dbReference>
<dbReference type="SUPFAM" id="SSF53671">
    <property type="entry name" value="Aspartate/ornithine carbamoyltransferase"/>
    <property type="match status" value="1"/>
</dbReference>
<dbReference type="PROSITE" id="PS00097">
    <property type="entry name" value="CARBAMOYLTRANSFERASE"/>
    <property type="match status" value="1"/>
</dbReference>
<evidence type="ECO:0000255" key="1">
    <source>
        <dbReference type="HAMAP-Rule" id="MF_00001"/>
    </source>
</evidence>
<keyword id="KW-0665">Pyrimidine biosynthesis</keyword>
<keyword id="KW-0808">Transferase</keyword>
<comment type="function">
    <text evidence="1">Catalyzes the condensation of carbamoyl phosphate and aspartate to form carbamoyl aspartate and inorganic phosphate, the committed step in the de novo pyrimidine nucleotide biosynthesis pathway.</text>
</comment>
<comment type="catalytic activity">
    <reaction evidence="1">
        <text>carbamoyl phosphate + L-aspartate = N-carbamoyl-L-aspartate + phosphate + H(+)</text>
        <dbReference type="Rhea" id="RHEA:20013"/>
        <dbReference type="ChEBI" id="CHEBI:15378"/>
        <dbReference type="ChEBI" id="CHEBI:29991"/>
        <dbReference type="ChEBI" id="CHEBI:32814"/>
        <dbReference type="ChEBI" id="CHEBI:43474"/>
        <dbReference type="ChEBI" id="CHEBI:58228"/>
        <dbReference type="EC" id="2.1.3.2"/>
    </reaction>
</comment>
<comment type="pathway">
    <text evidence="1">Pyrimidine metabolism; UMP biosynthesis via de novo pathway; (S)-dihydroorotate from bicarbonate: step 2/3.</text>
</comment>
<comment type="subunit">
    <text evidence="1">Heterododecamer (2C3:3R2) of six catalytic PyrB chains organized as two trimers (C3), and six regulatory PyrI chains organized as three dimers (R2).</text>
</comment>
<comment type="similarity">
    <text evidence="1">Belongs to the aspartate/ornithine carbamoyltransferase superfamily. ATCase family.</text>
</comment>
<proteinExistence type="inferred from homology"/>
<name>PYRB_YERPG</name>